<sequence>MIIVTGGFGMIGSNIVKALNEIGRKDILVVDNLKNGEKFVNLVDLDIADYCDKEDFIASIIAGDDFGEIDAVFHEGACSATTEWDGKYLMHNNYEYSKELLHFCLDHQIPFFYASSAATYGGRSDNFIEERKFEQPLNAYGYSKFLFDEYVRQVLPEADSPVCGFKYFNVYGPREQHKGSMASVAFHLNNQMLKGENPKLFEGSETFLRDFVYVEDVAKVNIWAWQNGISGIYNLGTGKAESFQAVAQAVIDFHGKGEIEKIPFPDHLKSRYQTFTQADLTKLRAAGYTGTFKTVAEGTKEYMAWLNR</sequence>
<evidence type="ECO:0000255" key="1">
    <source>
        <dbReference type="HAMAP-Rule" id="MF_01601"/>
    </source>
</evidence>
<comment type="function">
    <text evidence="1">Catalyzes the interconversion between ADP-D-glycero-beta-D-manno-heptose and ADP-L-glycero-beta-D-manno-heptose via an epimerization at carbon 6 of the heptose.</text>
</comment>
<comment type="catalytic activity">
    <reaction evidence="1">
        <text>ADP-D-glycero-beta-D-manno-heptose = ADP-L-glycero-beta-D-manno-heptose</text>
        <dbReference type="Rhea" id="RHEA:17577"/>
        <dbReference type="ChEBI" id="CHEBI:59967"/>
        <dbReference type="ChEBI" id="CHEBI:61506"/>
        <dbReference type="EC" id="5.1.3.20"/>
    </reaction>
</comment>
<comment type="cofactor">
    <cofactor evidence="1">
        <name>NADP(+)</name>
        <dbReference type="ChEBI" id="CHEBI:58349"/>
    </cofactor>
    <text evidence="1">Binds 1 NADP(+) per subunit.</text>
</comment>
<comment type="pathway">
    <text evidence="1">Nucleotide-sugar biosynthesis; ADP-L-glycero-beta-D-manno-heptose biosynthesis; ADP-L-glycero-beta-D-manno-heptose from D-glycero-beta-D-manno-heptose 7-phosphate: step 4/4.</text>
</comment>
<comment type="subunit">
    <text evidence="1">Homopentamer.</text>
</comment>
<comment type="domain">
    <text evidence="1">Contains a large N-terminal NADP-binding domain, and a smaller C-terminal substrate-binding domain.</text>
</comment>
<comment type="similarity">
    <text evidence="1">Belongs to the NAD(P)-dependent epimerase/dehydratase family. HldD subfamily.</text>
</comment>
<dbReference type="EC" id="5.1.3.20" evidence="1"/>
<dbReference type="EMBL" id="CP000687">
    <property type="protein sequence ID" value="ABY70294.1"/>
    <property type="molecule type" value="Genomic_DNA"/>
</dbReference>
<dbReference type="SMR" id="B0BSD7"/>
<dbReference type="KEGG" id="apj:APJL_1742"/>
<dbReference type="HOGENOM" id="CLU_007383_1_3_6"/>
<dbReference type="UniPathway" id="UPA00356">
    <property type="reaction ID" value="UER00440"/>
</dbReference>
<dbReference type="Proteomes" id="UP000008547">
    <property type="component" value="Chromosome"/>
</dbReference>
<dbReference type="GO" id="GO:0008712">
    <property type="term" value="F:ADP-glyceromanno-heptose 6-epimerase activity"/>
    <property type="evidence" value="ECO:0007669"/>
    <property type="project" value="UniProtKB-UniRule"/>
</dbReference>
<dbReference type="GO" id="GO:0050661">
    <property type="term" value="F:NADP binding"/>
    <property type="evidence" value="ECO:0007669"/>
    <property type="project" value="InterPro"/>
</dbReference>
<dbReference type="GO" id="GO:0097171">
    <property type="term" value="P:ADP-L-glycero-beta-D-manno-heptose biosynthetic process"/>
    <property type="evidence" value="ECO:0007669"/>
    <property type="project" value="UniProtKB-UniPathway"/>
</dbReference>
<dbReference type="GO" id="GO:0005975">
    <property type="term" value="P:carbohydrate metabolic process"/>
    <property type="evidence" value="ECO:0007669"/>
    <property type="project" value="UniProtKB-UniRule"/>
</dbReference>
<dbReference type="CDD" id="cd05248">
    <property type="entry name" value="ADP_GME_SDR_e"/>
    <property type="match status" value="1"/>
</dbReference>
<dbReference type="Gene3D" id="3.40.50.720">
    <property type="entry name" value="NAD(P)-binding Rossmann-like Domain"/>
    <property type="match status" value="1"/>
</dbReference>
<dbReference type="Gene3D" id="3.90.25.10">
    <property type="entry name" value="UDP-galactose 4-epimerase, domain 1"/>
    <property type="match status" value="1"/>
</dbReference>
<dbReference type="HAMAP" id="MF_01601">
    <property type="entry name" value="Heptose_epimerase"/>
    <property type="match status" value="1"/>
</dbReference>
<dbReference type="InterPro" id="IPR001509">
    <property type="entry name" value="Epimerase_deHydtase"/>
</dbReference>
<dbReference type="InterPro" id="IPR011912">
    <property type="entry name" value="Heptose_epim"/>
</dbReference>
<dbReference type="InterPro" id="IPR036291">
    <property type="entry name" value="NAD(P)-bd_dom_sf"/>
</dbReference>
<dbReference type="NCBIfam" id="TIGR02197">
    <property type="entry name" value="heptose_epim"/>
    <property type="match status" value="1"/>
</dbReference>
<dbReference type="NCBIfam" id="NF008360">
    <property type="entry name" value="PRK11150.1"/>
    <property type="match status" value="1"/>
</dbReference>
<dbReference type="PANTHER" id="PTHR43103:SF3">
    <property type="entry name" value="ADP-L-GLYCERO-D-MANNO-HEPTOSE-6-EPIMERASE"/>
    <property type="match status" value="1"/>
</dbReference>
<dbReference type="PANTHER" id="PTHR43103">
    <property type="entry name" value="NUCLEOSIDE-DIPHOSPHATE-SUGAR EPIMERASE"/>
    <property type="match status" value="1"/>
</dbReference>
<dbReference type="Pfam" id="PF01370">
    <property type="entry name" value="Epimerase"/>
    <property type="match status" value="1"/>
</dbReference>
<dbReference type="SUPFAM" id="SSF51735">
    <property type="entry name" value="NAD(P)-binding Rossmann-fold domains"/>
    <property type="match status" value="1"/>
</dbReference>
<organism>
    <name type="scientific">Actinobacillus pleuropneumoniae serotype 3 (strain JL03)</name>
    <dbReference type="NCBI Taxonomy" id="434271"/>
    <lineage>
        <taxon>Bacteria</taxon>
        <taxon>Pseudomonadati</taxon>
        <taxon>Pseudomonadota</taxon>
        <taxon>Gammaproteobacteria</taxon>
        <taxon>Pasteurellales</taxon>
        <taxon>Pasteurellaceae</taxon>
        <taxon>Actinobacillus</taxon>
    </lineage>
</organism>
<feature type="chain" id="PRO_1000148064" description="ADP-L-glycero-D-manno-heptose-6-epimerase">
    <location>
        <begin position="1"/>
        <end position="308"/>
    </location>
</feature>
<feature type="active site" description="Proton acceptor" evidence="1">
    <location>
        <position position="140"/>
    </location>
</feature>
<feature type="active site" description="Proton acceptor" evidence="1">
    <location>
        <position position="178"/>
    </location>
</feature>
<feature type="binding site" evidence="1">
    <location>
        <begin position="10"/>
        <end position="11"/>
    </location>
    <ligand>
        <name>NADP(+)</name>
        <dbReference type="ChEBI" id="CHEBI:58349"/>
    </ligand>
</feature>
<feature type="binding site" evidence="1">
    <location>
        <begin position="31"/>
        <end position="32"/>
    </location>
    <ligand>
        <name>NADP(+)</name>
        <dbReference type="ChEBI" id="CHEBI:58349"/>
    </ligand>
</feature>
<feature type="binding site" evidence="1">
    <location>
        <position position="38"/>
    </location>
    <ligand>
        <name>NADP(+)</name>
        <dbReference type="ChEBI" id="CHEBI:58349"/>
    </ligand>
</feature>
<feature type="binding site" evidence="1">
    <location>
        <position position="53"/>
    </location>
    <ligand>
        <name>NADP(+)</name>
        <dbReference type="ChEBI" id="CHEBI:58349"/>
    </ligand>
</feature>
<feature type="binding site" evidence="1">
    <location>
        <begin position="75"/>
        <end position="79"/>
    </location>
    <ligand>
        <name>NADP(+)</name>
        <dbReference type="ChEBI" id="CHEBI:58349"/>
    </ligand>
</feature>
<feature type="binding site" evidence="1">
    <location>
        <position position="92"/>
    </location>
    <ligand>
        <name>NADP(+)</name>
        <dbReference type="ChEBI" id="CHEBI:58349"/>
    </ligand>
</feature>
<feature type="binding site" evidence="1">
    <location>
        <position position="144"/>
    </location>
    <ligand>
        <name>NADP(+)</name>
        <dbReference type="ChEBI" id="CHEBI:58349"/>
    </ligand>
</feature>
<feature type="binding site" evidence="1">
    <location>
        <position position="169"/>
    </location>
    <ligand>
        <name>substrate</name>
    </ligand>
</feature>
<feature type="binding site" evidence="1">
    <location>
        <position position="170"/>
    </location>
    <ligand>
        <name>NADP(+)</name>
        <dbReference type="ChEBI" id="CHEBI:58349"/>
    </ligand>
</feature>
<feature type="binding site" evidence="1">
    <location>
        <position position="178"/>
    </location>
    <ligand>
        <name>NADP(+)</name>
        <dbReference type="ChEBI" id="CHEBI:58349"/>
    </ligand>
</feature>
<feature type="binding site" evidence="1">
    <location>
        <position position="180"/>
    </location>
    <ligand>
        <name>substrate</name>
    </ligand>
</feature>
<feature type="binding site" evidence="1">
    <location>
        <position position="187"/>
    </location>
    <ligand>
        <name>substrate</name>
    </ligand>
</feature>
<feature type="binding site" evidence="1">
    <location>
        <begin position="201"/>
        <end position="204"/>
    </location>
    <ligand>
        <name>substrate</name>
    </ligand>
</feature>
<feature type="binding site" evidence="1">
    <location>
        <position position="209"/>
    </location>
    <ligand>
        <name>substrate</name>
    </ligand>
</feature>
<feature type="binding site" evidence="1">
    <location>
        <position position="272"/>
    </location>
    <ligand>
        <name>substrate</name>
    </ligand>
</feature>
<reference key="1">
    <citation type="journal article" date="2008" name="PLoS ONE">
        <title>Genome biology of Actinobacillus pleuropneumoniae JL03, an isolate of serotype 3 prevalent in China.</title>
        <authorList>
            <person name="Xu Z."/>
            <person name="Zhou Y."/>
            <person name="Li L."/>
            <person name="Zhou R."/>
            <person name="Xiao S."/>
            <person name="Wan Y."/>
            <person name="Zhang S."/>
            <person name="Wang K."/>
            <person name="Li W."/>
            <person name="Li L."/>
            <person name="Jin H."/>
            <person name="Kang M."/>
            <person name="Dalai B."/>
            <person name="Li T."/>
            <person name="Liu L."/>
            <person name="Cheng Y."/>
            <person name="Zhang L."/>
            <person name="Xu T."/>
            <person name="Zheng H."/>
            <person name="Pu S."/>
            <person name="Wang B."/>
            <person name="Gu W."/>
            <person name="Zhang X.L."/>
            <person name="Zhu G.-F."/>
            <person name="Wang S."/>
            <person name="Zhao G.-P."/>
            <person name="Chen H."/>
        </authorList>
    </citation>
    <scope>NUCLEOTIDE SEQUENCE [LARGE SCALE GENOMIC DNA]</scope>
    <source>
        <strain>JL03</strain>
    </source>
</reference>
<accession>B0BSD7</accession>
<keyword id="KW-0119">Carbohydrate metabolism</keyword>
<keyword id="KW-0413">Isomerase</keyword>
<keyword id="KW-0521">NADP</keyword>
<name>HLDD_ACTPJ</name>
<protein>
    <recommendedName>
        <fullName evidence="1">ADP-L-glycero-D-manno-heptose-6-epimerase</fullName>
        <ecNumber evidence="1">5.1.3.20</ecNumber>
    </recommendedName>
    <alternativeName>
        <fullName evidence="1">ADP-L-glycero-beta-D-manno-heptose-6-epimerase</fullName>
        <shortName evidence="1">ADP-glyceromanno-heptose 6-epimerase</shortName>
        <shortName evidence="1">ADP-hep 6-epimerase</shortName>
        <shortName evidence="1">AGME</shortName>
    </alternativeName>
</protein>
<proteinExistence type="inferred from homology"/>
<gene>
    <name evidence="1" type="primary">hldD</name>
    <name type="ordered locus">APJL_1742</name>
</gene>